<evidence type="ECO:0000250" key="1">
    <source>
        <dbReference type="UniProtKB" id="P0AFI7"/>
    </source>
</evidence>
<evidence type="ECO:0000269" key="2">
    <source>
    </source>
</evidence>
<evidence type="ECO:0000269" key="3">
    <source>
    </source>
</evidence>
<evidence type="ECO:0000269" key="4">
    <source>
    </source>
</evidence>
<evidence type="ECO:0000269" key="5">
    <source>
    </source>
</evidence>
<evidence type="ECO:0000269" key="6">
    <source>
    </source>
</evidence>
<evidence type="ECO:0000303" key="7">
    <source>
    </source>
</evidence>
<evidence type="ECO:0000305" key="8"/>
<evidence type="ECO:0000305" key="9">
    <source>
    </source>
</evidence>
<evidence type="ECO:0000305" key="10">
    <source>
    </source>
</evidence>
<evidence type="ECO:0000305" key="11">
    <source>
    </source>
</evidence>
<evidence type="ECO:0007744" key="12">
    <source>
    </source>
</evidence>
<evidence type="ECO:0007744" key="13">
    <source>
    </source>
</evidence>
<evidence type="ECO:0007829" key="14">
    <source>
        <dbReference type="PDB" id="3HY8"/>
    </source>
</evidence>
<evidence type="ECO:0007829" key="15">
    <source>
        <dbReference type="PDB" id="6H00"/>
    </source>
</evidence>
<name>PNPO_HUMAN</name>
<reference key="1">
    <citation type="submission" date="2002-01" db="EMBL/GenBank/DDBJ databases">
        <authorList>
            <person name="Kwon O.-S."/>
        </authorList>
    </citation>
    <scope>NUCLEOTIDE SEQUENCE [MRNA] (ISOFORM 1)</scope>
    <source>
        <tissue>Brain</tissue>
    </source>
</reference>
<reference key="2">
    <citation type="journal article" date="2004" name="Nat. Genet.">
        <title>Complete sequencing and characterization of 21,243 full-length human cDNAs.</title>
        <authorList>
            <person name="Ota T."/>
            <person name="Suzuki Y."/>
            <person name="Nishikawa T."/>
            <person name="Otsuki T."/>
            <person name="Sugiyama T."/>
            <person name="Irie R."/>
            <person name="Wakamatsu A."/>
            <person name="Hayashi K."/>
            <person name="Sato H."/>
            <person name="Nagai K."/>
            <person name="Kimura K."/>
            <person name="Makita H."/>
            <person name="Sekine M."/>
            <person name="Obayashi M."/>
            <person name="Nishi T."/>
            <person name="Shibahara T."/>
            <person name="Tanaka T."/>
            <person name="Ishii S."/>
            <person name="Yamamoto J."/>
            <person name="Saito K."/>
            <person name="Kawai Y."/>
            <person name="Isono Y."/>
            <person name="Nakamura Y."/>
            <person name="Nagahari K."/>
            <person name="Murakami K."/>
            <person name="Yasuda T."/>
            <person name="Iwayanagi T."/>
            <person name="Wagatsuma M."/>
            <person name="Shiratori A."/>
            <person name="Sudo H."/>
            <person name="Hosoiri T."/>
            <person name="Kaku Y."/>
            <person name="Kodaira H."/>
            <person name="Kondo H."/>
            <person name="Sugawara M."/>
            <person name="Takahashi M."/>
            <person name="Kanda K."/>
            <person name="Yokoi T."/>
            <person name="Furuya T."/>
            <person name="Kikkawa E."/>
            <person name="Omura Y."/>
            <person name="Abe K."/>
            <person name="Kamihara K."/>
            <person name="Katsuta N."/>
            <person name="Sato K."/>
            <person name="Tanikawa M."/>
            <person name="Yamazaki M."/>
            <person name="Ninomiya K."/>
            <person name="Ishibashi T."/>
            <person name="Yamashita H."/>
            <person name="Murakawa K."/>
            <person name="Fujimori K."/>
            <person name="Tanai H."/>
            <person name="Kimata M."/>
            <person name="Watanabe M."/>
            <person name="Hiraoka S."/>
            <person name="Chiba Y."/>
            <person name="Ishida S."/>
            <person name="Ono Y."/>
            <person name="Takiguchi S."/>
            <person name="Watanabe S."/>
            <person name="Yosida M."/>
            <person name="Hotuta T."/>
            <person name="Kusano J."/>
            <person name="Kanehori K."/>
            <person name="Takahashi-Fujii A."/>
            <person name="Hara H."/>
            <person name="Tanase T.-O."/>
            <person name="Nomura Y."/>
            <person name="Togiya S."/>
            <person name="Komai F."/>
            <person name="Hara R."/>
            <person name="Takeuchi K."/>
            <person name="Arita M."/>
            <person name="Imose N."/>
            <person name="Musashino K."/>
            <person name="Yuuki H."/>
            <person name="Oshima A."/>
            <person name="Sasaki N."/>
            <person name="Aotsuka S."/>
            <person name="Yoshikawa Y."/>
            <person name="Matsunawa H."/>
            <person name="Ichihara T."/>
            <person name="Shiohata N."/>
            <person name="Sano S."/>
            <person name="Moriya S."/>
            <person name="Momiyama H."/>
            <person name="Satoh N."/>
            <person name="Takami S."/>
            <person name="Terashima Y."/>
            <person name="Suzuki O."/>
            <person name="Nakagawa S."/>
            <person name="Senoh A."/>
            <person name="Mizoguchi H."/>
            <person name="Goto Y."/>
            <person name="Shimizu F."/>
            <person name="Wakebe H."/>
            <person name="Hishigaki H."/>
            <person name="Watanabe T."/>
            <person name="Sugiyama A."/>
            <person name="Takemoto M."/>
            <person name="Kawakami B."/>
            <person name="Yamazaki M."/>
            <person name="Watanabe K."/>
            <person name="Kumagai A."/>
            <person name="Itakura S."/>
            <person name="Fukuzumi Y."/>
            <person name="Fujimori Y."/>
            <person name="Komiyama M."/>
            <person name="Tashiro H."/>
            <person name="Tanigami A."/>
            <person name="Fujiwara T."/>
            <person name="Ono T."/>
            <person name="Yamada K."/>
            <person name="Fujii Y."/>
            <person name="Ozaki K."/>
            <person name="Hirao M."/>
            <person name="Ohmori Y."/>
            <person name="Kawabata A."/>
            <person name="Hikiji T."/>
            <person name="Kobatake N."/>
            <person name="Inagaki H."/>
            <person name="Ikema Y."/>
            <person name="Okamoto S."/>
            <person name="Okitani R."/>
            <person name="Kawakami T."/>
            <person name="Noguchi S."/>
            <person name="Itoh T."/>
            <person name="Shigeta K."/>
            <person name="Senba T."/>
            <person name="Matsumura K."/>
            <person name="Nakajima Y."/>
            <person name="Mizuno T."/>
            <person name="Morinaga M."/>
            <person name="Sasaki M."/>
            <person name="Togashi T."/>
            <person name="Oyama M."/>
            <person name="Hata H."/>
            <person name="Watanabe M."/>
            <person name="Komatsu T."/>
            <person name="Mizushima-Sugano J."/>
            <person name="Satoh T."/>
            <person name="Shirai Y."/>
            <person name="Takahashi Y."/>
            <person name="Nakagawa K."/>
            <person name="Okumura K."/>
            <person name="Nagase T."/>
            <person name="Nomura N."/>
            <person name="Kikuchi H."/>
            <person name="Masuho Y."/>
            <person name="Yamashita R."/>
            <person name="Nakai K."/>
            <person name="Yada T."/>
            <person name="Nakamura Y."/>
            <person name="Ohara O."/>
            <person name="Isogai T."/>
            <person name="Sugano S."/>
        </authorList>
    </citation>
    <scope>NUCLEOTIDE SEQUENCE [LARGE SCALE MRNA] (ISOFORMS 1; 2; 3 AND 4)</scope>
    <source>
        <tissue>Liver</tissue>
        <tissue>Teratocarcinoma</tissue>
        <tissue>Thymus</tissue>
        <tissue>Thyroid</tissue>
    </source>
</reference>
<reference key="3">
    <citation type="journal article" date="2006" name="Nature">
        <title>DNA sequence of human chromosome 17 and analysis of rearrangement in the human lineage.</title>
        <authorList>
            <person name="Zody M.C."/>
            <person name="Garber M."/>
            <person name="Adams D.J."/>
            <person name="Sharpe T."/>
            <person name="Harrow J."/>
            <person name="Lupski J.R."/>
            <person name="Nicholson C."/>
            <person name="Searle S.M."/>
            <person name="Wilming L."/>
            <person name="Young S.K."/>
            <person name="Abouelleil A."/>
            <person name="Allen N.R."/>
            <person name="Bi W."/>
            <person name="Bloom T."/>
            <person name="Borowsky M.L."/>
            <person name="Bugalter B.E."/>
            <person name="Butler J."/>
            <person name="Chang J.L."/>
            <person name="Chen C.-K."/>
            <person name="Cook A."/>
            <person name="Corum B."/>
            <person name="Cuomo C.A."/>
            <person name="de Jong P.J."/>
            <person name="DeCaprio D."/>
            <person name="Dewar K."/>
            <person name="FitzGerald M."/>
            <person name="Gilbert J."/>
            <person name="Gibson R."/>
            <person name="Gnerre S."/>
            <person name="Goldstein S."/>
            <person name="Grafham D.V."/>
            <person name="Grocock R."/>
            <person name="Hafez N."/>
            <person name="Hagopian D.S."/>
            <person name="Hart E."/>
            <person name="Norman C.H."/>
            <person name="Humphray S."/>
            <person name="Jaffe D.B."/>
            <person name="Jones M."/>
            <person name="Kamal M."/>
            <person name="Khodiyar V.K."/>
            <person name="LaButti K."/>
            <person name="Laird G."/>
            <person name="Lehoczky J."/>
            <person name="Liu X."/>
            <person name="Lokyitsang T."/>
            <person name="Loveland J."/>
            <person name="Lui A."/>
            <person name="Macdonald P."/>
            <person name="Major J.E."/>
            <person name="Matthews L."/>
            <person name="Mauceli E."/>
            <person name="McCarroll S.A."/>
            <person name="Mihalev A.H."/>
            <person name="Mudge J."/>
            <person name="Nguyen C."/>
            <person name="Nicol R."/>
            <person name="O'Leary S.B."/>
            <person name="Osoegawa K."/>
            <person name="Schwartz D.C."/>
            <person name="Shaw-Smith C."/>
            <person name="Stankiewicz P."/>
            <person name="Steward C."/>
            <person name="Swarbreck D."/>
            <person name="Venkataraman V."/>
            <person name="Whittaker C.A."/>
            <person name="Yang X."/>
            <person name="Zimmer A.R."/>
            <person name="Bradley A."/>
            <person name="Hubbard T."/>
            <person name="Birren B.W."/>
            <person name="Rogers J."/>
            <person name="Lander E.S."/>
            <person name="Nusbaum C."/>
        </authorList>
    </citation>
    <scope>NUCLEOTIDE SEQUENCE [LARGE SCALE GENOMIC DNA]</scope>
</reference>
<reference key="4">
    <citation type="submission" date="2005-09" db="EMBL/GenBank/DDBJ databases">
        <authorList>
            <person name="Mural R.J."/>
            <person name="Istrail S."/>
            <person name="Sutton G.G."/>
            <person name="Florea L."/>
            <person name="Halpern A.L."/>
            <person name="Mobarry C.M."/>
            <person name="Lippert R."/>
            <person name="Walenz B."/>
            <person name="Shatkay H."/>
            <person name="Dew I."/>
            <person name="Miller J.R."/>
            <person name="Flanigan M.J."/>
            <person name="Edwards N.J."/>
            <person name="Bolanos R."/>
            <person name="Fasulo D."/>
            <person name="Halldorsson B.V."/>
            <person name="Hannenhalli S."/>
            <person name="Turner R."/>
            <person name="Yooseph S."/>
            <person name="Lu F."/>
            <person name="Nusskern D.R."/>
            <person name="Shue B.C."/>
            <person name="Zheng X.H."/>
            <person name="Zhong F."/>
            <person name="Delcher A.L."/>
            <person name="Huson D.H."/>
            <person name="Kravitz S.A."/>
            <person name="Mouchard L."/>
            <person name="Reinert K."/>
            <person name="Remington K.A."/>
            <person name="Clark A.G."/>
            <person name="Waterman M.S."/>
            <person name="Eichler E.E."/>
            <person name="Adams M.D."/>
            <person name="Hunkapiller M.W."/>
            <person name="Myers E.W."/>
            <person name="Venter J.C."/>
        </authorList>
    </citation>
    <scope>NUCLEOTIDE SEQUENCE [LARGE SCALE GENOMIC DNA]</scope>
</reference>
<reference key="5">
    <citation type="journal article" date="2004" name="Genome Res.">
        <title>The status, quality, and expansion of the NIH full-length cDNA project: the Mammalian Gene Collection (MGC).</title>
        <authorList>
            <consortium name="The MGC Project Team"/>
        </authorList>
    </citation>
    <scope>NUCLEOTIDE SEQUENCE [LARGE SCALE MRNA] (ISOFORM 1)</scope>
    <source>
        <tissue>Lymph</tissue>
    </source>
</reference>
<reference key="6">
    <citation type="journal article" date="2011" name="BMC Syst. Biol.">
        <title>Initial characterization of the human central proteome.</title>
        <authorList>
            <person name="Burkard T.R."/>
            <person name="Planyavsky M."/>
            <person name="Kaupe I."/>
            <person name="Breitwieser F.P."/>
            <person name="Buerckstuemmer T."/>
            <person name="Bennett K.L."/>
            <person name="Superti-Furga G."/>
            <person name="Colinge J."/>
        </authorList>
    </citation>
    <scope>IDENTIFICATION BY MASS SPECTROMETRY [LARGE SCALE ANALYSIS]</scope>
</reference>
<reference key="7">
    <citation type="journal article" date="2013" name="J. Proteome Res.">
        <title>Toward a comprehensive characterization of a human cancer cell phosphoproteome.</title>
        <authorList>
            <person name="Zhou H."/>
            <person name="Di Palma S."/>
            <person name="Preisinger C."/>
            <person name="Peng M."/>
            <person name="Polat A.N."/>
            <person name="Heck A.J."/>
            <person name="Mohammed S."/>
        </authorList>
    </citation>
    <scope>PHOSPHORYLATION [LARGE SCALE ANALYSIS] AT SER-241</scope>
    <scope>IDENTIFICATION BY MASS SPECTROMETRY [LARGE SCALE ANALYSIS]</scope>
    <source>
        <tissue>Cervix carcinoma</tissue>
        <tissue>Erythroleukemia</tissue>
    </source>
</reference>
<reference key="8">
    <citation type="journal article" date="2014" name="J. Proteomics">
        <title>An enzyme assisted RP-RPLC approach for in-depth analysis of human liver phosphoproteome.</title>
        <authorList>
            <person name="Bian Y."/>
            <person name="Song C."/>
            <person name="Cheng K."/>
            <person name="Dong M."/>
            <person name="Wang F."/>
            <person name="Huang J."/>
            <person name="Sun D."/>
            <person name="Wang L."/>
            <person name="Ye M."/>
            <person name="Zou H."/>
        </authorList>
    </citation>
    <scope>PHOSPHORYLATION [LARGE SCALE ANALYSIS] AT THR-238 AND SER-241</scope>
    <scope>IDENTIFICATION BY MASS SPECTROMETRY [LARGE SCALE ANALYSIS]</scope>
    <source>
        <tissue>Liver</tissue>
    </source>
</reference>
<reference key="9">
    <citation type="journal article" date="2003" name="Protein Sci.">
        <title>Structure and properties of recombinant human pyridoxine 5'-phosphate oxidase.</title>
        <authorList>
            <person name="Musayev F.N."/>
            <person name="Di Salvo M.L."/>
            <person name="Ko T.-P."/>
            <person name="Schirch V."/>
            <person name="Safo M.K."/>
        </authorList>
    </citation>
    <scope>X-RAY CRYSTALLOGRAPHY (1.95 ANGSTROMS) OF 49-161 IN COMPLEX WITH FMN AND PYRIDOXAL 5'-PHOSPHATE</scope>
    <scope>PARTIAL PROTEIN SEQUENCE</scope>
    <scope>SUBUNIT</scope>
    <scope>ACTIVITY REGULATION</scope>
    <scope>FUNCTION</scope>
    <scope>CATALYTIC ACTIVITY</scope>
    <scope>COFACTOR</scope>
</reference>
<reference key="10">
    <citation type="journal article" date="2004" name="Eur. J. Biochem.">
        <title>Genomic organization, tissue distribution and deletion mutation of human pyridoxine 5'-phosphate oxidase.</title>
        <authorList>
            <person name="Kang J.H."/>
            <person name="Hong M.L."/>
            <person name="Kim D.W."/>
            <person name="Park J."/>
            <person name="Kang T.C."/>
            <person name="Won M.H."/>
            <person name="Baek N.I."/>
            <person name="Moon B.J."/>
            <person name="Choi S.Y."/>
            <person name="Kwon O.S."/>
        </authorList>
    </citation>
    <scope>FUNCTION</scope>
    <scope>CATALYTIC ACTIVITY</scope>
    <scope>BIOPHYSICOCHEMICAL PROPERTIES</scope>
    <scope>TISSUE SPECIFICITY</scope>
    <scope>MUTAGENESIS OF 1-MET--LEU-56; 1-MET--CYS-72 AND 238-TYR--PRO-261</scope>
</reference>
<reference key="11">
    <citation type="journal article" date="2005" name="Hum. Mol. Genet.">
        <title>Neonatal epileptic encephalopathy caused by mutations in the PNPO gene encoding pyridox(am)ine 5'-phosphate oxidase.</title>
        <authorList>
            <person name="Mills P.B."/>
            <person name="Surtees R.A.H."/>
            <person name="Champion M.P."/>
            <person name="Beesley C.E."/>
            <person name="Dalton N."/>
            <person name="Scambler P.J."/>
            <person name="Heales S.J.R."/>
            <person name="Briddon A."/>
            <person name="Scheimberg I."/>
            <person name="Hoffmann G.F."/>
            <person name="Zschocke J."/>
            <person name="Clayton P.T."/>
        </authorList>
    </citation>
    <scope>VARIANT PNPOD TRP-229</scope>
    <scope>VARIANT LYS-50</scope>
    <scope>FUNCTION</scope>
    <scope>CATALYTIC ACTIVITY</scope>
    <scope>PATHWAY</scope>
</reference>
<reference key="12">
    <citation type="journal article" date="2013" name="Nat. Genet.">
        <title>Targeted resequencing in epileptic encephalopathies identifies de novo mutations in CHD2 and SYNGAP1.</title>
        <authorList>
            <person name="Carvill G.L."/>
            <person name="Heavin S.B."/>
            <person name="Yendle S.C."/>
            <person name="McMahon J.M."/>
            <person name="O'Roak B.J."/>
            <person name="Cook J."/>
            <person name="Khan A."/>
            <person name="Dorschner M.O."/>
            <person name="Weaver M."/>
            <person name="Calvert S."/>
            <person name="Malone S."/>
            <person name="Wallace G."/>
            <person name="Stanley T."/>
            <person name="Bye A.M."/>
            <person name="Bleasel A."/>
            <person name="Howell K.B."/>
            <person name="Kivity S."/>
            <person name="Mackay M.T."/>
            <person name="Rodriguez-Casero V."/>
            <person name="Webster R."/>
            <person name="Korczyn A."/>
            <person name="Afawi Z."/>
            <person name="Zelnick N."/>
            <person name="Lerman-Sagie T."/>
            <person name="Lev D."/>
            <person name="Moeller R.S."/>
            <person name="Gill D."/>
            <person name="Andrade D.M."/>
            <person name="Freeman J.L."/>
            <person name="Sadleir L.G."/>
            <person name="Shendure J."/>
            <person name="Berkovic S.F."/>
            <person name="Scheffer I.E."/>
            <person name="Mefford H.C."/>
        </authorList>
    </citation>
    <scope>VARIANT PNPOD GLN-229</scope>
</reference>
<reference key="13">
    <citation type="journal article" date="2017" name="Hum. Mutat.">
        <title>Diagnostic targeted resequencing in 349 patients with drug-resistant pediatric epilepsies identifies causative mutations in 30 different genes.</title>
        <authorList>
            <consortium name="Clinical Study Group"/>
            <person name="Parrini E."/>
            <person name="Marini C."/>
            <person name="Mei D."/>
            <person name="Galuppi A."/>
            <person name="Cellini E."/>
            <person name="Pucatti D."/>
            <person name="Chiti L."/>
            <person name="Rutigliano D."/>
            <person name="Bianchini C."/>
            <person name="Virdo S."/>
            <person name="De Vita D."/>
            <person name="Bigoni S."/>
            <person name="Barba C."/>
            <person name="Mari F."/>
            <person name="Montomoli M."/>
            <person name="Pisano T."/>
            <person name="Rosati A."/>
            <person name="Guerrini R."/>
        </authorList>
    </citation>
    <scope>VARIANT PNPOD HIS-225</scope>
</reference>
<proteinExistence type="evidence at protein level"/>
<gene>
    <name type="primary">PNPO</name>
</gene>
<sequence>MTCWLRGVTATFGRPAEWPGYLSHLCGRSAAMDLGPMRKSYRGDREAFEETHLTSLDPVKQFAAWFEEAVQCPDIGEANAMCLATCTRDGKPSARMLLLKGFGKDGFRFFTNFESRKGKELDSNPFASLVFYWEPLNRQVRVEGPVKKLPEEEAECYFHSRPKSSQIGAVVSHQSSVIPDREYLRKKNEELEQLYQDQEVPKPKSWGGYVLYPQVMEFWQGQTNRLHDRIVFRRGLPTGDSPLGPMTHRGEEDWLYERLAP</sequence>
<organism>
    <name type="scientific">Homo sapiens</name>
    <name type="common">Human</name>
    <dbReference type="NCBI Taxonomy" id="9606"/>
    <lineage>
        <taxon>Eukaryota</taxon>
        <taxon>Metazoa</taxon>
        <taxon>Chordata</taxon>
        <taxon>Craniata</taxon>
        <taxon>Vertebrata</taxon>
        <taxon>Euteleostomi</taxon>
        <taxon>Mammalia</taxon>
        <taxon>Eutheria</taxon>
        <taxon>Euarchontoglires</taxon>
        <taxon>Primates</taxon>
        <taxon>Haplorrhini</taxon>
        <taxon>Catarrhini</taxon>
        <taxon>Hominidae</taxon>
        <taxon>Homo</taxon>
    </lineage>
</organism>
<accession>Q9NVS9</accession>
<accession>B4E0V0</accession>
<accession>B4E152</accession>
<accession>B4E1D7</accession>
<accession>D3DTT9</accession>
<comment type="function">
    <text evidence="2 3 4">Catalyzes the oxidation of either pyridoxine 5'-phosphate (PNP) or pyridoxamine 5'-phosphate (PMP) into pyridoxal 5'-phosphate (PLP).</text>
</comment>
<comment type="catalytic activity">
    <reaction evidence="2 3">
        <text>pyridoxine 5'-phosphate + O2 = pyridoxal 5'-phosphate + H2O2</text>
        <dbReference type="Rhea" id="RHEA:15149"/>
        <dbReference type="ChEBI" id="CHEBI:15379"/>
        <dbReference type="ChEBI" id="CHEBI:16240"/>
        <dbReference type="ChEBI" id="CHEBI:58589"/>
        <dbReference type="ChEBI" id="CHEBI:597326"/>
        <dbReference type="EC" id="1.4.3.5"/>
    </reaction>
    <physiologicalReaction direction="left-to-right" evidence="9 10">
        <dbReference type="Rhea" id="RHEA:15150"/>
    </physiologicalReaction>
</comment>
<comment type="catalytic activity">
    <reaction evidence="2 3 4">
        <text>pyridoxamine 5'-phosphate + O2 + H2O = pyridoxal 5'-phosphate + H2O2 + NH4(+)</text>
        <dbReference type="Rhea" id="RHEA:15817"/>
        <dbReference type="ChEBI" id="CHEBI:15377"/>
        <dbReference type="ChEBI" id="CHEBI:15379"/>
        <dbReference type="ChEBI" id="CHEBI:16240"/>
        <dbReference type="ChEBI" id="CHEBI:28938"/>
        <dbReference type="ChEBI" id="CHEBI:58451"/>
        <dbReference type="ChEBI" id="CHEBI:597326"/>
        <dbReference type="EC" id="1.4.3.5"/>
    </reaction>
    <physiologicalReaction direction="left-to-right" evidence="9 10 11">
        <dbReference type="Rhea" id="RHEA:15818"/>
    </physiologicalReaction>
</comment>
<comment type="cofactor">
    <cofactor evidence="2">
        <name>FMN</name>
        <dbReference type="ChEBI" id="CHEBI:58210"/>
    </cofactor>
    <text evidence="2">Binds 1 FMN per subunit.</text>
</comment>
<comment type="biophysicochemical properties">
    <kinetics>
        <KM evidence="3">2.1 uM for pyridoxine 5'-phosphate</KM>
        <KM evidence="3">6.2 uM for pyridoxamine 5'-phosphate</KM>
        <Vmax evidence="3">0.1 umol/min/mg enzyme toward pyridoxine 5'-phosphate</Vmax>
        <Vmax evidence="3">0.05 umol/min/mg enzyme toward pyridoxamine 5'-phosphate</Vmax>
    </kinetics>
</comment>
<comment type="pathway">
    <text evidence="9 11">Cofactor metabolism; pyridoxal 5'-phosphate salvage; pyridoxal 5'-phosphate from pyridoxamine 5'-phosphate: step 1/1.</text>
</comment>
<comment type="pathway">
    <text evidence="9">Cofactor metabolism; pyridoxal 5'-phosphate salvage; pyridoxal 5'-phosphate from pyridoxine 5'-phosphate: step 1/1.</text>
</comment>
<comment type="subunit">
    <text evidence="2">Homodimer.</text>
</comment>
<comment type="interaction">
    <interactant intactId="EBI-11030787">
        <id>Q9NVS9</id>
    </interactant>
    <interactant intactId="EBI-11522760">
        <id>Q6RW13-2</id>
        <label>AGTRAP</label>
    </interactant>
    <organismsDiffer>false</organismsDiffer>
    <experiments>6</experiments>
</comment>
<comment type="interaction">
    <interactant intactId="EBI-11030787">
        <id>Q9NVS9</id>
    </interactant>
    <interactant intactId="EBI-11522780">
        <id>Q96DZ9-2</id>
        <label>CMTM5</label>
    </interactant>
    <organismsDiffer>false</organismsDiffer>
    <experiments>3</experiments>
</comment>
<comment type="interaction">
    <interactant intactId="EBI-11030787">
        <id>Q9NVS9</id>
    </interactant>
    <interactant intactId="EBI-2830566">
        <id>Q9H400</id>
        <label>LIME1</label>
    </interactant>
    <organismsDiffer>false</organismsDiffer>
    <experiments>3</experiments>
</comment>
<comment type="interaction">
    <interactant intactId="EBI-11030787">
        <id>Q9NVS9</id>
    </interactant>
    <interactant intactId="EBI-2690033">
        <id>Q99551</id>
        <label>MTERF1</label>
    </interactant>
    <organismsDiffer>false</organismsDiffer>
    <experiments>3</experiments>
</comment>
<comment type="alternative products">
    <event type="alternative splicing"/>
    <isoform>
        <id>Q9NVS9-1</id>
        <name>1</name>
        <sequence type="displayed"/>
    </isoform>
    <isoform>
        <id>Q9NVS9-2</id>
        <name>2</name>
        <sequence type="described" ref="VSP_058769 VSP_058770"/>
    </isoform>
    <isoform>
        <id>Q9NVS9-3</id>
        <name>3</name>
        <sequence type="described" ref="VSP_056410"/>
    </isoform>
    <isoform>
        <id>Q9NVS9-4</id>
        <name>4</name>
        <sequence type="described" ref="VSP_056411"/>
    </isoform>
</comment>
<comment type="tissue specificity">
    <text evidence="3">Ubiquitous. Expressed in liver, brain, lung, prostate and stomach (at protein level).</text>
</comment>
<comment type="disease" evidence="4 5 6">
    <disease id="DI-02235">
        <name>Pyridoxine-5'-phosphate oxidase deficiency</name>
        <acronym>PNPOD</acronym>
        <description>The main feature of neonatal epileptic encephalopathy is the onset within hours of birth of a severe seizure disorder that does not respond to anticonvulsant drugs and can be fatal. Seizures can cease with the administration of PLP, being resistant to treatment with pyridoxine,.</description>
        <dbReference type="MIM" id="610090"/>
    </disease>
    <text>The disease is caused by variants affecting the gene represented in this entry.</text>
</comment>
<comment type="miscellaneous">
    <molecule>Isoform 2</molecule>
    <text evidence="8">May be produced at very low levels due to a premature stop codon in the mRNA, leading to nonsense-mediated mRNA decay.</text>
</comment>
<comment type="similarity">
    <text evidence="8">Belongs to the pyridoxamine 5'-phosphate oxidase family.</text>
</comment>
<comment type="sequence caution" evidence="8">
    <conflict type="erroneous translation">
        <sequence resource="EMBL-CDS" id="BAG64562"/>
    </conflict>
    <text>Wrong choice of frame.</text>
</comment>
<protein>
    <recommendedName>
        <fullName>Pyridoxine-5'-phosphate oxidase</fullName>
        <ecNumber evidence="2 3 4">1.4.3.5</ecNumber>
    </recommendedName>
    <alternativeName>
        <fullName>Pyridoxamine-phosphate oxidase</fullName>
    </alternativeName>
</protein>
<keyword id="KW-0002">3D-structure</keyword>
<keyword id="KW-0025">Alternative splicing</keyword>
<keyword id="KW-0903">Direct protein sequencing</keyword>
<keyword id="KW-0225">Disease variant</keyword>
<keyword id="KW-0887">Epilepsy</keyword>
<keyword id="KW-0285">Flavoprotein</keyword>
<keyword id="KW-0288">FMN</keyword>
<keyword id="KW-0560">Oxidoreductase</keyword>
<keyword id="KW-0597">Phosphoprotein</keyword>
<keyword id="KW-1267">Proteomics identification</keyword>
<keyword id="KW-0663">Pyridoxal phosphate</keyword>
<keyword id="KW-0664">Pyridoxine biosynthesis</keyword>
<keyword id="KW-1185">Reference proteome</keyword>
<feature type="chain" id="PRO_0000167783" description="Pyridoxine-5'-phosphate oxidase">
    <location>
        <begin position="1"/>
        <end position="261"/>
    </location>
</feature>
<feature type="binding site" evidence="1">
    <location>
        <begin position="42"/>
        <end position="45"/>
    </location>
    <ligand>
        <name>pyridoxal 5'-phosphate</name>
        <dbReference type="ChEBI" id="CHEBI:597326"/>
    </ligand>
</feature>
<feature type="binding site" evidence="2">
    <location>
        <begin position="95"/>
        <end position="98"/>
    </location>
    <ligand>
        <name>FMN</name>
        <dbReference type="ChEBI" id="CHEBI:58210"/>
    </ligand>
</feature>
<feature type="binding site" evidence="2">
    <location>
        <position position="100"/>
    </location>
    <ligand>
        <name>pyridoxal 5'-phosphate</name>
        <dbReference type="ChEBI" id="CHEBI:597326"/>
    </ligand>
</feature>
<feature type="binding site" evidence="2">
    <location>
        <begin position="110"/>
        <end position="111"/>
    </location>
    <ligand>
        <name>FMN</name>
        <dbReference type="ChEBI" id="CHEBI:58210"/>
    </ligand>
</feature>
<feature type="binding site" evidence="2">
    <location>
        <begin position="116"/>
        <end position="117"/>
    </location>
    <ligand>
        <name>FMN</name>
        <dbReference type="ChEBI" id="CHEBI:58210"/>
    </ligand>
</feature>
<feature type="binding site" evidence="1">
    <location>
        <position position="139"/>
    </location>
    <ligand>
        <name>FMN</name>
        <dbReference type="ChEBI" id="CHEBI:58210"/>
    </ligand>
</feature>
<feature type="binding site" evidence="2">
    <location>
        <position position="157"/>
    </location>
    <ligand>
        <name>pyridoxal 5'-phosphate</name>
        <dbReference type="ChEBI" id="CHEBI:597326"/>
    </ligand>
</feature>
<feature type="binding site" evidence="2">
    <location>
        <position position="161"/>
    </location>
    <ligand>
        <name>pyridoxal 5'-phosphate</name>
        <dbReference type="ChEBI" id="CHEBI:597326"/>
    </ligand>
</feature>
<feature type="binding site" evidence="2">
    <location>
        <position position="165"/>
    </location>
    <ligand>
        <name>pyridoxal 5'-phosphate</name>
        <dbReference type="ChEBI" id="CHEBI:597326"/>
    </ligand>
</feature>
<feature type="binding site" evidence="2">
    <location>
        <begin position="174"/>
        <end position="175"/>
    </location>
    <ligand>
        <name>FMN</name>
        <dbReference type="ChEBI" id="CHEBI:58210"/>
    </ligand>
</feature>
<feature type="binding site" evidence="1">
    <location>
        <position position="219"/>
    </location>
    <ligand>
        <name>FMN</name>
        <dbReference type="ChEBI" id="CHEBI:58210"/>
    </ligand>
</feature>
<feature type="binding site" evidence="1">
    <location>
        <begin position="225"/>
        <end position="227"/>
    </location>
    <ligand>
        <name>pyridoxal 5'-phosphate</name>
        <dbReference type="ChEBI" id="CHEBI:597326"/>
    </ligand>
</feature>
<feature type="binding site" evidence="1">
    <location>
        <position position="229"/>
    </location>
    <ligand>
        <name>FMN</name>
        <dbReference type="ChEBI" id="CHEBI:58210"/>
    </ligand>
</feature>
<feature type="modified residue" description="Phosphothreonine" evidence="13">
    <location>
        <position position="238"/>
    </location>
</feature>
<feature type="modified residue" description="Phosphoserine" evidence="12 13">
    <location>
        <position position="241"/>
    </location>
</feature>
<feature type="splice variant" id="VSP_058769" description="In isoform 2." evidence="7">
    <original>AFEETHLTSLDPVKQFAAWFEEA</original>
    <variation>RWKTLCSHVAAEGLRERWLPLLH</variation>
    <location>
        <begin position="47"/>
        <end position="69"/>
    </location>
</feature>
<feature type="splice variant" id="VSP_058770" description="In isoform 2." evidence="7">
    <location>
        <begin position="70"/>
        <end position="261"/>
    </location>
</feature>
<feature type="splice variant" id="VSP_056410" description="In isoform 3." evidence="7">
    <location>
        <begin position="122"/>
        <end position="139"/>
    </location>
</feature>
<feature type="splice variant" id="VSP_056411" description="In isoform 4." evidence="7">
    <location>
        <begin position="140"/>
        <end position="182"/>
    </location>
</feature>
<feature type="sequence variant" id="VAR_029358" description="In dbSNP:rs549477447." evidence="4">
    <original>E</original>
    <variation>K</variation>
    <location>
        <position position="50"/>
    </location>
</feature>
<feature type="sequence variant" id="VAR_029359" description="In dbSNP:rs17679445.">
    <original>R</original>
    <variation>Q</variation>
    <location>
        <position position="116"/>
    </location>
</feature>
<feature type="sequence variant" id="VAR_078229" description="In PNPOD; dbSNP:rs550423482." evidence="6">
    <original>R</original>
    <variation>H</variation>
    <location>
        <position position="225"/>
    </location>
</feature>
<feature type="sequence variant" id="VAR_078643" description="In PNPOD; dbSNP:rs773450573." evidence="5">
    <original>R</original>
    <variation>Q</variation>
    <location>
        <position position="229"/>
    </location>
</feature>
<feature type="sequence variant" id="VAR_029360" description="In PNPOD; strong activity decrease; dbSNP:rs104894629." evidence="4">
    <original>R</original>
    <variation>W</variation>
    <location>
        <position position="229"/>
    </location>
</feature>
<feature type="mutagenesis site" description="Loss of catalytic activity." evidence="3">
    <location>
        <begin position="1"/>
        <end position="72"/>
    </location>
</feature>
<feature type="mutagenesis site" description="Has no effect on the catalytic activity." evidence="3">
    <location>
        <begin position="1"/>
        <end position="56"/>
    </location>
</feature>
<feature type="mutagenesis site" description="Loss of catalytic activity." evidence="3">
    <location>
        <begin position="238"/>
        <end position="261"/>
    </location>
</feature>
<feature type="helix" evidence="15">
    <location>
        <begin position="58"/>
        <end position="71"/>
    </location>
</feature>
<feature type="strand" evidence="15">
    <location>
        <begin position="80"/>
        <end position="86"/>
    </location>
</feature>
<feature type="strand" evidence="14">
    <location>
        <begin position="88"/>
        <end position="90"/>
    </location>
</feature>
<feature type="strand" evidence="15">
    <location>
        <begin position="92"/>
        <end position="98"/>
    </location>
</feature>
<feature type="strand" evidence="14">
    <location>
        <begin position="102"/>
        <end position="105"/>
    </location>
</feature>
<feature type="strand" evidence="15">
    <location>
        <begin position="106"/>
        <end position="112"/>
    </location>
</feature>
<feature type="helix" evidence="15">
    <location>
        <begin position="116"/>
        <end position="123"/>
    </location>
</feature>
<feature type="strand" evidence="15">
    <location>
        <begin position="126"/>
        <end position="133"/>
    </location>
</feature>
<feature type="helix" evidence="15">
    <location>
        <begin position="134"/>
        <end position="136"/>
    </location>
</feature>
<feature type="strand" evidence="15">
    <location>
        <begin position="138"/>
        <end position="148"/>
    </location>
</feature>
<feature type="helix" evidence="15">
    <location>
        <begin position="151"/>
        <end position="159"/>
    </location>
</feature>
<feature type="helix" evidence="15">
    <location>
        <begin position="163"/>
        <end position="171"/>
    </location>
</feature>
<feature type="helix" evidence="15">
    <location>
        <begin position="181"/>
        <end position="194"/>
    </location>
</feature>
<feature type="turn" evidence="15">
    <location>
        <begin position="195"/>
        <end position="197"/>
    </location>
</feature>
<feature type="strand" evidence="15">
    <location>
        <begin position="206"/>
        <end position="211"/>
    </location>
</feature>
<feature type="strand" evidence="15">
    <location>
        <begin position="214"/>
        <end position="220"/>
    </location>
</feature>
<feature type="strand" evidence="15">
    <location>
        <begin position="228"/>
        <end position="234"/>
    </location>
</feature>
<feature type="strand" evidence="15">
    <location>
        <begin position="254"/>
        <end position="258"/>
    </location>
</feature>
<dbReference type="EC" id="1.4.3.5" evidence="2 3 4"/>
<dbReference type="EMBL" id="AF468030">
    <property type="protein sequence ID" value="AAM76918.1"/>
    <property type="molecule type" value="mRNA"/>
</dbReference>
<dbReference type="EMBL" id="AK001397">
    <property type="protein sequence ID" value="BAA91668.1"/>
    <property type="molecule type" value="mRNA"/>
</dbReference>
<dbReference type="EMBL" id="AK303536">
    <property type="protein sequence ID" value="BAG64562.1"/>
    <property type="status" value="ALT_SEQ"/>
    <property type="molecule type" value="mRNA"/>
</dbReference>
<dbReference type="EMBL" id="AK303665">
    <property type="protein sequence ID" value="BAG64664.1"/>
    <property type="molecule type" value="mRNA"/>
</dbReference>
<dbReference type="EMBL" id="AK303792">
    <property type="protein sequence ID" value="BAG64749.1"/>
    <property type="molecule type" value="mRNA"/>
</dbReference>
<dbReference type="EMBL" id="CH471109">
    <property type="protein sequence ID" value="EAW94770.1"/>
    <property type="molecule type" value="Genomic_DNA"/>
</dbReference>
<dbReference type="EMBL" id="CH471109">
    <property type="protein sequence ID" value="EAW94771.1"/>
    <property type="molecule type" value="Genomic_DNA"/>
</dbReference>
<dbReference type="EMBL" id="BC006525">
    <property type="protein sequence ID" value="AAH06525.1"/>
    <property type="molecule type" value="mRNA"/>
</dbReference>
<dbReference type="CCDS" id="CCDS11522.1">
    <molecule id="Q9NVS9-1"/>
</dbReference>
<dbReference type="RefSeq" id="NP_060599.1">
    <molecule id="Q9NVS9-1"/>
    <property type="nucleotide sequence ID" value="NM_018129.4"/>
</dbReference>
<dbReference type="RefSeq" id="XP_011523270.1">
    <property type="nucleotide sequence ID" value="XM_011524968.2"/>
</dbReference>
<dbReference type="PDB" id="1NRG">
    <property type="method" value="X-ray"/>
    <property type="resolution" value="1.95 A"/>
    <property type="chains" value="A=1-261"/>
</dbReference>
<dbReference type="PDB" id="3HY8">
    <property type="method" value="X-ray"/>
    <property type="resolution" value="2.50 A"/>
    <property type="chains" value="A=1-261"/>
</dbReference>
<dbReference type="PDB" id="6H00">
    <property type="method" value="X-ray"/>
    <property type="resolution" value="1.66 A"/>
    <property type="chains" value="A=1-261"/>
</dbReference>
<dbReference type="PDB" id="8QYT">
    <property type="method" value="X-ray"/>
    <property type="resolution" value="1.69 A"/>
    <property type="chains" value="A=1-261"/>
</dbReference>
<dbReference type="PDB" id="8QYW">
    <property type="method" value="X-ray"/>
    <property type="resolution" value="2.75 A"/>
    <property type="chains" value="A=1-261"/>
</dbReference>
<dbReference type="PDB" id="8ROS">
    <property type="method" value="X-ray"/>
    <property type="resolution" value="1.55 A"/>
    <property type="chains" value="AAA=1-261"/>
</dbReference>
<dbReference type="PDBsum" id="1NRG"/>
<dbReference type="PDBsum" id="3HY8"/>
<dbReference type="PDBsum" id="6H00"/>
<dbReference type="PDBsum" id="8QYT"/>
<dbReference type="PDBsum" id="8QYW"/>
<dbReference type="PDBsum" id="8ROS"/>
<dbReference type="SMR" id="Q9NVS9"/>
<dbReference type="BioGRID" id="120463">
    <property type="interactions" value="46"/>
</dbReference>
<dbReference type="FunCoup" id="Q9NVS9">
    <property type="interactions" value="1097"/>
</dbReference>
<dbReference type="IntAct" id="Q9NVS9">
    <property type="interactions" value="21"/>
</dbReference>
<dbReference type="STRING" id="9606.ENSP00000493302"/>
<dbReference type="BindingDB" id="Q9NVS9"/>
<dbReference type="ChEMBL" id="CHEMBL3271932"/>
<dbReference type="DrugBank" id="DB03247">
    <property type="generic name" value="Flavin mononucleotide"/>
</dbReference>
<dbReference type="DrugBank" id="DB03345">
    <property type="generic name" value="Mercaptoethanol"/>
</dbReference>
<dbReference type="DrugBank" id="DB00114">
    <property type="generic name" value="Pyridoxal phosphate"/>
</dbReference>
<dbReference type="DrugBank" id="DB02209">
    <property type="generic name" value="Pyridoxine phosphate"/>
</dbReference>
<dbReference type="DrugCentral" id="Q9NVS9"/>
<dbReference type="GlyGen" id="Q9NVS9">
    <property type="glycosylation" value="1 site, 1 O-linked glycan (1 site)"/>
</dbReference>
<dbReference type="iPTMnet" id="Q9NVS9"/>
<dbReference type="MetOSite" id="Q9NVS9"/>
<dbReference type="PhosphoSitePlus" id="Q9NVS9"/>
<dbReference type="SwissPalm" id="Q9NVS9"/>
<dbReference type="BioMuta" id="PNPO"/>
<dbReference type="DMDM" id="37082126"/>
<dbReference type="REPRODUCTION-2DPAGE" id="IPI00018272"/>
<dbReference type="jPOST" id="Q9NVS9"/>
<dbReference type="MassIVE" id="Q9NVS9"/>
<dbReference type="PaxDb" id="9606-ENSP00000225573"/>
<dbReference type="PeptideAtlas" id="Q9NVS9"/>
<dbReference type="ProteomicsDB" id="5700"/>
<dbReference type="ProteomicsDB" id="5726"/>
<dbReference type="ProteomicsDB" id="5748"/>
<dbReference type="ProteomicsDB" id="82855">
    <molecule id="Q9NVS9-1"/>
</dbReference>
<dbReference type="Pumba" id="Q9NVS9"/>
<dbReference type="Antibodypedia" id="17803">
    <property type="antibodies" value="372 antibodies from 26 providers"/>
</dbReference>
<dbReference type="DNASU" id="55163"/>
<dbReference type="Ensembl" id="ENST00000225573.5">
    <molecule id="Q9NVS9-4"/>
    <property type="protein sequence ID" value="ENSP00000225573.5"/>
    <property type="gene ID" value="ENSG00000108439.11"/>
</dbReference>
<dbReference type="Ensembl" id="ENST00000434554.7">
    <molecule id="Q9NVS9-3"/>
    <property type="protein sequence ID" value="ENSP00000399960.3"/>
    <property type="gene ID" value="ENSG00000108439.11"/>
</dbReference>
<dbReference type="Ensembl" id="ENST00000582171.6">
    <molecule id="Q9NVS9-2"/>
    <property type="protein sequence ID" value="ENSP00000463994.1"/>
    <property type="gene ID" value="ENSG00000108439.11"/>
</dbReference>
<dbReference type="Ensembl" id="ENST00000585320.5">
    <molecule id="Q9NVS9-2"/>
    <property type="protein sequence ID" value="ENSP00000462345.1"/>
    <property type="gene ID" value="ENSG00000108439.11"/>
</dbReference>
<dbReference type="Ensembl" id="ENST00000641856.1">
    <molecule id="Q9NVS9-2"/>
    <property type="protein sequence ID" value="ENSP00000493224.1"/>
    <property type="gene ID" value="ENSG00000108439.11"/>
</dbReference>
<dbReference type="Ensembl" id="ENST00000642017.2">
    <molecule id="Q9NVS9-1"/>
    <property type="protein sequence ID" value="ENSP00000493302.2"/>
    <property type="gene ID" value="ENSG00000108439.11"/>
</dbReference>
<dbReference type="GeneID" id="55163"/>
<dbReference type="KEGG" id="hsa:55163"/>
<dbReference type="MANE-Select" id="ENST00000642017.2">
    <property type="protein sequence ID" value="ENSP00000493302.2"/>
    <property type="RefSeq nucleotide sequence ID" value="NM_018129.4"/>
    <property type="RefSeq protein sequence ID" value="NP_060599.1"/>
</dbReference>
<dbReference type="UCSC" id="uc010wlb.3">
    <molecule id="Q9NVS9-1"/>
    <property type="organism name" value="human"/>
</dbReference>
<dbReference type="AGR" id="HGNC:30260"/>
<dbReference type="CTD" id="55163"/>
<dbReference type="DisGeNET" id="55163"/>
<dbReference type="GeneCards" id="PNPO"/>
<dbReference type="GeneReviews" id="PNPO"/>
<dbReference type="HGNC" id="HGNC:30260">
    <property type="gene designation" value="PNPO"/>
</dbReference>
<dbReference type="HPA" id="ENSG00000108439">
    <property type="expression patterns" value="Tissue enhanced (liver)"/>
</dbReference>
<dbReference type="MalaCards" id="PNPO"/>
<dbReference type="MIM" id="603287">
    <property type="type" value="gene"/>
</dbReference>
<dbReference type="MIM" id="610090">
    <property type="type" value="phenotype"/>
</dbReference>
<dbReference type="neXtProt" id="NX_Q9NVS9"/>
<dbReference type="OpenTargets" id="ENSG00000108439"/>
<dbReference type="Orphanet" id="79096">
    <property type="disease" value="Pyridoxamine-5-phosphate deficiency-developmental and epileptic encephalopathy"/>
</dbReference>
<dbReference type="PharmGKB" id="PA134915565"/>
<dbReference type="VEuPathDB" id="HostDB:ENSG00000108439"/>
<dbReference type="eggNOG" id="KOG2586">
    <property type="taxonomic scope" value="Eukaryota"/>
</dbReference>
<dbReference type="GeneTree" id="ENSGT00390000011219"/>
<dbReference type="HOGENOM" id="CLU_032263_2_1_1"/>
<dbReference type="InParanoid" id="Q9NVS9"/>
<dbReference type="OMA" id="AYFRTRP"/>
<dbReference type="OrthoDB" id="303614at2759"/>
<dbReference type="PAN-GO" id="Q9NVS9">
    <property type="GO annotations" value="2 GO annotations based on evolutionary models"/>
</dbReference>
<dbReference type="PhylomeDB" id="Q9NVS9"/>
<dbReference type="TreeFam" id="TF313411"/>
<dbReference type="BioCyc" id="MetaCyc:HS03105-MONOMER"/>
<dbReference type="BRENDA" id="1.4.3.5">
    <property type="organism ID" value="2681"/>
</dbReference>
<dbReference type="PathwayCommons" id="Q9NVS9"/>
<dbReference type="Reactome" id="R-HSA-964975">
    <property type="pathway name" value="Vitamin B6 activation to pyridoxal phosphate"/>
</dbReference>
<dbReference type="SABIO-RK" id="Q9NVS9"/>
<dbReference type="SignaLink" id="Q9NVS9"/>
<dbReference type="UniPathway" id="UPA01068">
    <property type="reaction ID" value="UER00304"/>
</dbReference>
<dbReference type="UniPathway" id="UPA01068">
    <property type="reaction ID" value="UER00305"/>
</dbReference>
<dbReference type="BioGRID-ORCS" id="55163">
    <property type="hits" value="31 hits in 1165 CRISPR screens"/>
</dbReference>
<dbReference type="ChiTaRS" id="PNPO">
    <property type="organism name" value="human"/>
</dbReference>
<dbReference type="EvolutionaryTrace" id="Q9NVS9"/>
<dbReference type="GeneWiki" id="PNPO"/>
<dbReference type="GenomeRNAi" id="55163"/>
<dbReference type="Pharos" id="Q9NVS9">
    <property type="development level" value="Tchem"/>
</dbReference>
<dbReference type="PRO" id="PR:Q9NVS9"/>
<dbReference type="Proteomes" id="UP000005640">
    <property type="component" value="Chromosome 17"/>
</dbReference>
<dbReference type="RNAct" id="Q9NVS9">
    <property type="molecule type" value="protein"/>
</dbReference>
<dbReference type="Bgee" id="ENSG00000108439">
    <property type="expression patterns" value="Expressed in right lobe of liver and 157 other cell types or tissues"/>
</dbReference>
<dbReference type="ExpressionAtlas" id="Q9NVS9">
    <property type="expression patterns" value="baseline and differential"/>
</dbReference>
<dbReference type="GO" id="GO:0005829">
    <property type="term" value="C:cytosol"/>
    <property type="evidence" value="ECO:0000304"/>
    <property type="project" value="Reactome"/>
</dbReference>
<dbReference type="GO" id="GO:0005739">
    <property type="term" value="C:mitochondrion"/>
    <property type="evidence" value="ECO:0006056"/>
    <property type="project" value="FlyBase"/>
</dbReference>
<dbReference type="GO" id="GO:0010181">
    <property type="term" value="F:FMN binding"/>
    <property type="evidence" value="ECO:0000314"/>
    <property type="project" value="CAFA"/>
</dbReference>
<dbReference type="GO" id="GO:0042803">
    <property type="term" value="F:protein homodimerization activity"/>
    <property type="evidence" value="ECO:0000314"/>
    <property type="project" value="CAFA"/>
</dbReference>
<dbReference type="GO" id="GO:0030170">
    <property type="term" value="F:pyridoxal phosphate binding"/>
    <property type="evidence" value="ECO:0000314"/>
    <property type="project" value="CAFA"/>
</dbReference>
<dbReference type="GO" id="GO:0004733">
    <property type="term" value="F:pyridoxamine phosphate oxidase activity"/>
    <property type="evidence" value="ECO:0000314"/>
    <property type="project" value="UniProtKB"/>
</dbReference>
<dbReference type="GO" id="GO:0042823">
    <property type="term" value="P:pyridoxal phosphate biosynthetic process"/>
    <property type="evidence" value="ECO:0000314"/>
    <property type="project" value="CAFA"/>
</dbReference>
<dbReference type="GO" id="GO:0042818">
    <property type="term" value="P:pyridoxamine metabolic process"/>
    <property type="evidence" value="ECO:0007669"/>
    <property type="project" value="Ensembl"/>
</dbReference>
<dbReference type="GO" id="GO:0008615">
    <property type="term" value="P:pyridoxine biosynthetic process"/>
    <property type="evidence" value="ECO:0007669"/>
    <property type="project" value="UniProtKB-KW"/>
</dbReference>
<dbReference type="DisProt" id="DP00168"/>
<dbReference type="FunFam" id="2.30.110.10:FF:000020">
    <property type="entry name" value="PNPO isoform 11"/>
    <property type="match status" value="1"/>
</dbReference>
<dbReference type="Gene3D" id="2.30.110.10">
    <property type="entry name" value="Electron Transport, Fmn-binding Protein, Chain A"/>
    <property type="match status" value="1"/>
</dbReference>
<dbReference type="HAMAP" id="MF_01629">
    <property type="entry name" value="PdxH"/>
    <property type="match status" value="1"/>
</dbReference>
<dbReference type="InterPro" id="IPR000659">
    <property type="entry name" value="Pyridox_Oxase"/>
</dbReference>
<dbReference type="InterPro" id="IPR019740">
    <property type="entry name" value="Pyridox_Oxase_CS"/>
</dbReference>
<dbReference type="InterPro" id="IPR011576">
    <property type="entry name" value="Pyridox_Oxase_N"/>
</dbReference>
<dbReference type="InterPro" id="IPR019576">
    <property type="entry name" value="Pyridoxamine_oxidase_dimer_C"/>
</dbReference>
<dbReference type="InterPro" id="IPR012349">
    <property type="entry name" value="Split_barrel_FMN-bd"/>
</dbReference>
<dbReference type="NCBIfam" id="TIGR00558">
    <property type="entry name" value="pdxH"/>
    <property type="match status" value="1"/>
</dbReference>
<dbReference type="NCBIfam" id="NF004231">
    <property type="entry name" value="PRK05679.1"/>
    <property type="match status" value="1"/>
</dbReference>
<dbReference type="PANTHER" id="PTHR10851:SF0">
    <property type="entry name" value="PYRIDOXINE-5'-PHOSPHATE OXIDASE"/>
    <property type="match status" value="1"/>
</dbReference>
<dbReference type="PANTHER" id="PTHR10851">
    <property type="entry name" value="PYRIDOXINE-5-PHOSPHATE OXIDASE"/>
    <property type="match status" value="1"/>
</dbReference>
<dbReference type="Pfam" id="PF10590">
    <property type="entry name" value="PNP_phzG_C"/>
    <property type="match status" value="1"/>
</dbReference>
<dbReference type="Pfam" id="PF01243">
    <property type="entry name" value="PNPOx_N"/>
    <property type="match status" value="1"/>
</dbReference>
<dbReference type="PIRSF" id="PIRSF000190">
    <property type="entry name" value="Pyd_amn-ph_oxd"/>
    <property type="match status" value="1"/>
</dbReference>
<dbReference type="SUPFAM" id="SSF50475">
    <property type="entry name" value="FMN-binding split barrel"/>
    <property type="match status" value="1"/>
</dbReference>
<dbReference type="PROSITE" id="PS01064">
    <property type="entry name" value="PYRIDOX_OXIDASE"/>
    <property type="match status" value="1"/>
</dbReference>